<protein>
    <recommendedName>
        <fullName>Receptor activity-modifying protein 1</fullName>
    </recommendedName>
    <alternativeName>
        <fullName>Calcitonin-receptor-like receptor activity-modifying protein 1</fullName>
        <shortName>CRLR activity-modifying protein 1</shortName>
    </alternativeName>
</protein>
<name>RAMP1_HUMAN</name>
<keyword id="KW-0002">3D-structure</keyword>
<keyword id="KW-1003">Cell membrane</keyword>
<keyword id="KW-1015">Disulfide bond</keyword>
<keyword id="KW-0472">Membrane</keyword>
<keyword id="KW-1267">Proteomics identification</keyword>
<keyword id="KW-0675">Receptor</keyword>
<keyword id="KW-1185">Reference proteome</keyword>
<keyword id="KW-0732">Signal</keyword>
<keyword id="KW-0812">Transmembrane</keyword>
<keyword id="KW-1133">Transmembrane helix</keyword>
<keyword id="KW-0813">Transport</keyword>
<feature type="signal peptide" evidence="1">
    <location>
        <begin position="1"/>
        <end position="26"/>
    </location>
</feature>
<feature type="chain" id="PRO_0000030168" description="Receptor activity-modifying protein 1">
    <location>
        <begin position="27"/>
        <end position="148"/>
    </location>
</feature>
<feature type="topological domain" description="Extracellular" evidence="1">
    <location>
        <begin position="27"/>
        <end position="118"/>
    </location>
</feature>
<feature type="transmembrane region" description="Helical" evidence="4 15">
    <location>
        <begin position="119"/>
        <end position="140"/>
    </location>
</feature>
<feature type="topological domain" description="Cytoplasmic" evidence="1">
    <location>
        <begin position="141"/>
        <end position="148"/>
    </location>
</feature>
<feature type="disulfide bond" evidence="5 6 17 18">
    <location>
        <begin position="27"/>
        <end position="82"/>
    </location>
</feature>
<feature type="disulfide bond" evidence="4 5 6 15 17 18">
    <location>
        <begin position="40"/>
        <end position="72"/>
    </location>
</feature>
<feature type="disulfide bond" evidence="4 5 6 15 17 18">
    <location>
        <begin position="57"/>
        <end position="104"/>
    </location>
</feature>
<feature type="helix" evidence="20">
    <location>
        <begin position="26"/>
        <end position="28"/>
    </location>
</feature>
<feature type="strand" evidence="21">
    <location>
        <begin position="29"/>
        <end position="31"/>
    </location>
</feature>
<feature type="helix" evidence="21">
    <location>
        <begin position="32"/>
        <end position="39"/>
    </location>
</feature>
<feature type="helix" evidence="21">
    <location>
        <begin position="41"/>
        <end position="51"/>
    </location>
</feature>
<feature type="helix" evidence="21">
    <location>
        <begin position="53"/>
        <end position="55"/>
    </location>
</feature>
<feature type="helix" evidence="21">
    <location>
        <begin position="59"/>
        <end position="79"/>
    </location>
</feature>
<feature type="strand" evidence="23">
    <location>
        <begin position="84"/>
        <end position="86"/>
    </location>
</feature>
<feature type="helix" evidence="21">
    <location>
        <begin position="87"/>
        <end position="100"/>
    </location>
</feature>
<feature type="turn" evidence="22">
    <location>
        <begin position="101"/>
        <end position="103"/>
    </location>
</feature>
<feature type="strand" evidence="19">
    <location>
        <begin position="111"/>
        <end position="113"/>
    </location>
</feature>
<feature type="helix" evidence="23">
    <location>
        <begin position="116"/>
        <end position="142"/>
    </location>
</feature>
<evidence type="ECO:0000255" key="1"/>
<evidence type="ECO:0000269" key="2">
    <source>
    </source>
</evidence>
<evidence type="ECO:0000269" key="3">
    <source>
    </source>
</evidence>
<evidence type="ECO:0000269" key="4">
    <source>
    </source>
</evidence>
<evidence type="ECO:0000269" key="5">
    <source>
    </source>
</evidence>
<evidence type="ECO:0000269" key="6">
    <source>
    </source>
</evidence>
<evidence type="ECO:0000269" key="7">
    <source>
    </source>
</evidence>
<evidence type="ECO:0000305" key="8"/>
<evidence type="ECO:0000312" key="9">
    <source>
        <dbReference type="HGNC" id="HGNC:9843"/>
    </source>
</evidence>
<evidence type="ECO:0007744" key="10">
    <source>
        <dbReference type="PDB" id="2YX8"/>
    </source>
</evidence>
<evidence type="ECO:0007744" key="11">
    <source>
        <dbReference type="PDB" id="3N7P"/>
    </source>
</evidence>
<evidence type="ECO:0007744" key="12">
    <source>
        <dbReference type="PDB" id="3N7R"/>
    </source>
</evidence>
<evidence type="ECO:0007744" key="13">
    <source>
        <dbReference type="PDB" id="3N7S"/>
    </source>
</evidence>
<evidence type="ECO:0007744" key="14">
    <source>
        <dbReference type="PDB" id="7KNT"/>
    </source>
</evidence>
<evidence type="ECO:0007744" key="15">
    <source>
        <dbReference type="PDB" id="7KNU"/>
    </source>
</evidence>
<evidence type="ECO:0007744" key="16">
    <source>
        <dbReference type="PDB" id="7TYF"/>
    </source>
</evidence>
<evidence type="ECO:0007744" key="17">
    <source>
        <dbReference type="PDB" id="7TYW"/>
    </source>
</evidence>
<evidence type="ECO:0007744" key="18">
    <source>
        <dbReference type="PDB" id="9AUC"/>
    </source>
</evidence>
<evidence type="ECO:0007829" key="19">
    <source>
        <dbReference type="PDB" id="3N7S"/>
    </source>
</evidence>
<evidence type="ECO:0007829" key="20">
    <source>
        <dbReference type="PDB" id="6D1U"/>
    </source>
</evidence>
<evidence type="ECO:0007829" key="21">
    <source>
        <dbReference type="PDB" id="6ZHO"/>
    </source>
</evidence>
<evidence type="ECO:0007829" key="22">
    <source>
        <dbReference type="PDB" id="6ZIS"/>
    </source>
</evidence>
<evidence type="ECO:0007829" key="23">
    <source>
        <dbReference type="PDB" id="7TYF"/>
    </source>
</evidence>
<comment type="function">
    <text evidence="4 5 6 7">Accessory protein that interacts with and modulates the function of G-protein coupled receptors including calcitonin gene-related peptide type 1 receptor (CALCRL) and calcitonin receptor (CALCR) (PubMed:33602864, PubMed:9620797, PubMed:35324283, PubMed:38603770). Required for the transport of CALCRL to the plasma membrane (PubMed:9620797). Together with CALCRL, form the receptor complex for the calcitonin gene-related peptides CGRP1/CALCA and CGRP2/CALCB (PubMed:33602864, PubMed:9620797). Together with CALCR, form the AMYR1 receptor complex for amylin/IAPP and CGRP1/CALCA (PubMed:35324283, PubMed:38603770).</text>
</comment>
<comment type="subunit">
    <text evidence="2 3 4 5">Heterodimer of CALCRL and RAMP1; the interaction induces allosteric modulation of CALCRL function and CGRP1/CALCA and CGRP2/CALCB ligand specificity (PubMed:18725456, PubMed:20826335, PubMed:33602864). Heterodimer of CALCR and RAMP1; interaction forms the AMYR1 receptor complex for amylin/IAPP and CGRP1/CALCA ligands (PubMed:35324283, PubMed:38603770).</text>
</comment>
<comment type="interaction">
    <interactant intactId="EBI-962893">
        <id>O60894</id>
    </interactant>
    <interactant intactId="EBI-962878">
        <id>Q16602</id>
        <label>CALCRL</label>
    </interactant>
    <organismsDiffer>false</organismsDiffer>
    <experiments>4</experiments>
</comment>
<comment type="interaction">
    <interactant intactId="EBI-962893">
        <id>O60894</id>
    </interactant>
    <interactant intactId="EBI-3932027">
        <id>P21145</id>
        <label>MAL</label>
    </interactant>
    <organismsDiffer>false</organismsDiffer>
    <experiments>3</experiments>
</comment>
<comment type="interaction">
    <interactant intactId="EBI-962893">
        <id>O60894</id>
    </interactant>
    <interactant intactId="EBI-12070086">
        <id>Q5J8X5</id>
        <label>MS4A13</label>
    </interactant>
    <organismsDiffer>false</organismsDiffer>
    <experiments>3</experiments>
</comment>
<comment type="interaction">
    <interactant intactId="EBI-962893">
        <id>O60894</id>
    </interactant>
    <interactant intactId="EBI-3919611">
        <id>Q16617</id>
        <label>NKG7</label>
    </interactant>
    <organismsDiffer>false</organismsDiffer>
    <experiments>3</experiments>
</comment>
<comment type="subcellular location">
    <subcellularLocation>
        <location evidence="4">Cell membrane</location>
        <topology evidence="4">Single-pass type I membrane protein</topology>
    </subcellularLocation>
</comment>
<comment type="tissue specificity">
    <text evidence="7">Expressed in many tissues including the uterus, bladder, brain, pancreas and gastro-intestinal tract.</text>
</comment>
<comment type="similarity">
    <text evidence="8">Belongs to the RAMP family.</text>
</comment>
<dbReference type="EMBL" id="AJ001014">
    <property type="protein sequence ID" value="CAA04472.1"/>
    <property type="molecule type" value="mRNA"/>
</dbReference>
<dbReference type="EMBL" id="AY265457">
    <property type="protein sequence ID" value="AAP23298.1"/>
    <property type="molecule type" value="mRNA"/>
</dbReference>
<dbReference type="EMBL" id="CR542032">
    <property type="protein sequence ID" value="CAG46829.1"/>
    <property type="molecule type" value="mRNA"/>
</dbReference>
<dbReference type="EMBL" id="CR542044">
    <property type="protein sequence ID" value="CAG46841.1"/>
    <property type="molecule type" value="mRNA"/>
</dbReference>
<dbReference type="EMBL" id="CH471063">
    <property type="protein sequence ID" value="EAW71127.1"/>
    <property type="molecule type" value="Genomic_DNA"/>
</dbReference>
<dbReference type="EMBL" id="BC000548">
    <property type="protein sequence ID" value="AAH00548.1"/>
    <property type="molecule type" value="mRNA"/>
</dbReference>
<dbReference type="CCDS" id="CCDS2522.1"/>
<dbReference type="RefSeq" id="NP_005846.1">
    <property type="nucleotide sequence ID" value="NM_005855.4"/>
</dbReference>
<dbReference type="PDB" id="2YX8">
    <property type="method" value="X-ray"/>
    <property type="resolution" value="2.40 A"/>
    <property type="chains" value="A=27-112"/>
</dbReference>
<dbReference type="PDB" id="3N7P">
    <property type="method" value="X-ray"/>
    <property type="resolution" value="2.80 A"/>
    <property type="chains" value="D/E/F/R=26-117"/>
</dbReference>
<dbReference type="PDB" id="3N7R">
    <property type="method" value="X-ray"/>
    <property type="resolution" value="2.90 A"/>
    <property type="chains" value="C/D=26-117"/>
</dbReference>
<dbReference type="PDB" id="3N7S">
    <property type="method" value="X-ray"/>
    <property type="resolution" value="2.10 A"/>
    <property type="chains" value="C/D=26-117"/>
</dbReference>
<dbReference type="PDB" id="4RWG">
    <property type="method" value="X-ray"/>
    <property type="resolution" value="2.44 A"/>
    <property type="chains" value="A/B/C=24-108"/>
</dbReference>
<dbReference type="PDB" id="5V6Y">
    <property type="method" value="X-ray"/>
    <property type="resolution" value="2.80 A"/>
    <property type="chains" value="A/B/C/D=24-111"/>
</dbReference>
<dbReference type="PDB" id="6D1U">
    <property type="method" value="X-ray"/>
    <property type="resolution" value="2.05 A"/>
    <property type="chains" value="A/B/C=24-111"/>
</dbReference>
<dbReference type="PDB" id="6E3Y">
    <property type="method" value="EM"/>
    <property type="resolution" value="3.30 A"/>
    <property type="chains" value="E=27-148"/>
</dbReference>
<dbReference type="PDB" id="6UMG">
    <property type="method" value="X-ray"/>
    <property type="resolution" value="2.70 A"/>
    <property type="chains" value="R/r=26-117"/>
</dbReference>
<dbReference type="PDB" id="6ZHO">
    <property type="method" value="X-ray"/>
    <property type="resolution" value="1.60 A"/>
    <property type="chains" value="A=24-109"/>
</dbReference>
<dbReference type="PDB" id="6ZIS">
    <property type="method" value="X-ray"/>
    <property type="resolution" value="1.73 A"/>
    <property type="chains" value="A=24-111"/>
</dbReference>
<dbReference type="PDB" id="7KNT">
    <property type="method" value="EM"/>
    <property type="resolution" value="3.15 A"/>
    <property type="chains" value="E=27-148"/>
</dbReference>
<dbReference type="PDB" id="7KNU">
    <property type="method" value="EM"/>
    <property type="resolution" value="3.49 A"/>
    <property type="chains" value="E=27-148"/>
</dbReference>
<dbReference type="PDB" id="7P0F">
    <property type="method" value="X-ray"/>
    <property type="resolution" value="1.85 A"/>
    <property type="chains" value="A=24-111"/>
</dbReference>
<dbReference type="PDB" id="7P0I">
    <property type="method" value="X-ray"/>
    <property type="resolution" value="2.30 A"/>
    <property type="chains" value="A=24-111"/>
</dbReference>
<dbReference type="PDB" id="7TYF">
    <property type="method" value="EM"/>
    <property type="resolution" value="2.20 A"/>
    <property type="chains" value="E=27-148"/>
</dbReference>
<dbReference type="PDB" id="7TYW">
    <property type="method" value="EM"/>
    <property type="resolution" value="3.00 A"/>
    <property type="chains" value="E=27-148"/>
</dbReference>
<dbReference type="PDB" id="8AX5">
    <property type="method" value="X-ray"/>
    <property type="resolution" value="2.75 A"/>
    <property type="chains" value="A=24-111"/>
</dbReference>
<dbReference type="PDB" id="8AX6">
    <property type="method" value="X-ray"/>
    <property type="resolution" value="1.90 A"/>
    <property type="chains" value="A=24-111"/>
</dbReference>
<dbReference type="PDB" id="8AX7">
    <property type="method" value="X-ray"/>
    <property type="resolution" value="1.65 A"/>
    <property type="chains" value="A=24-111"/>
</dbReference>
<dbReference type="PDB" id="9AUC">
    <property type="method" value="EM"/>
    <property type="resolution" value="2.40 A"/>
    <property type="chains" value="E=27-148"/>
</dbReference>
<dbReference type="PDBsum" id="2YX8"/>
<dbReference type="PDBsum" id="3N7P"/>
<dbReference type="PDBsum" id="3N7R"/>
<dbReference type="PDBsum" id="3N7S"/>
<dbReference type="PDBsum" id="4RWG"/>
<dbReference type="PDBsum" id="5V6Y"/>
<dbReference type="PDBsum" id="6D1U"/>
<dbReference type="PDBsum" id="6E3Y"/>
<dbReference type="PDBsum" id="6UMG"/>
<dbReference type="PDBsum" id="6ZHO"/>
<dbReference type="PDBsum" id="6ZIS"/>
<dbReference type="PDBsum" id="7KNT"/>
<dbReference type="PDBsum" id="7KNU"/>
<dbReference type="PDBsum" id="7P0F"/>
<dbReference type="PDBsum" id="7P0I"/>
<dbReference type="PDBsum" id="7TYF"/>
<dbReference type="PDBsum" id="7TYW"/>
<dbReference type="PDBsum" id="8AX5"/>
<dbReference type="PDBsum" id="8AX6"/>
<dbReference type="PDBsum" id="8AX7"/>
<dbReference type="PDBsum" id="9AUC"/>
<dbReference type="EMDB" id="EMD-22962"/>
<dbReference type="EMDB" id="EMD-22963"/>
<dbReference type="EMDB" id="EMD-26178"/>
<dbReference type="EMDB" id="EMD-26196"/>
<dbReference type="EMDB" id="EMD-43877"/>
<dbReference type="EMDB" id="EMD-8978"/>
<dbReference type="SMR" id="O60894"/>
<dbReference type="BioGRID" id="115558">
    <property type="interactions" value="46"/>
</dbReference>
<dbReference type="ComplexPortal" id="CPX-2173">
    <property type="entry name" value="Amylin receptor 1 complex"/>
</dbReference>
<dbReference type="ComplexPortal" id="CPX-2189">
    <property type="entry name" value="CGRP receptor complex"/>
</dbReference>
<dbReference type="CORUM" id="O60894"/>
<dbReference type="DIP" id="DIP-37675N"/>
<dbReference type="FunCoup" id="O60894">
    <property type="interactions" value="210"/>
</dbReference>
<dbReference type="IntAct" id="O60894">
    <property type="interactions" value="31"/>
</dbReference>
<dbReference type="STRING" id="9606.ENSP00000254661"/>
<dbReference type="BindingDB" id="O60894"/>
<dbReference type="ChEMBL" id="CHEMBL2107838"/>
<dbReference type="ChEMBL" id="CHEMBL2111189"/>
<dbReference type="DrugBank" id="DB01278">
    <property type="generic name" value="Pramlintide"/>
</dbReference>
<dbReference type="DrugCentral" id="O60894"/>
<dbReference type="GuidetoPHARMACOLOGY" id="51"/>
<dbReference type="TCDB" id="8.A.127.1.1">
    <property type="family name" value="the receptor activity-modifying protein (ramp) family"/>
</dbReference>
<dbReference type="GlyGen" id="O60894">
    <property type="glycosylation" value="1 site"/>
</dbReference>
<dbReference type="iPTMnet" id="O60894"/>
<dbReference type="PhosphoSitePlus" id="O60894"/>
<dbReference type="BioMuta" id="RAMP1"/>
<dbReference type="MassIVE" id="O60894"/>
<dbReference type="PaxDb" id="9606-ENSP00000254661"/>
<dbReference type="PeptideAtlas" id="O60894"/>
<dbReference type="ProteomicsDB" id="49657"/>
<dbReference type="Antibodypedia" id="34486">
    <property type="antibodies" value="230 antibodies from 38 providers"/>
</dbReference>
<dbReference type="DNASU" id="10267"/>
<dbReference type="Ensembl" id="ENST00000254661.5">
    <property type="protein sequence ID" value="ENSP00000254661.4"/>
    <property type="gene ID" value="ENSG00000132329.11"/>
</dbReference>
<dbReference type="GeneID" id="10267"/>
<dbReference type="KEGG" id="hsa:10267"/>
<dbReference type="MANE-Select" id="ENST00000254661.5">
    <property type="protein sequence ID" value="ENSP00000254661.4"/>
    <property type="RefSeq nucleotide sequence ID" value="NM_005855.4"/>
    <property type="RefSeq protein sequence ID" value="NP_005846.1"/>
</dbReference>
<dbReference type="UCSC" id="uc002vxj.4">
    <property type="organism name" value="human"/>
</dbReference>
<dbReference type="AGR" id="HGNC:9843"/>
<dbReference type="CTD" id="10267"/>
<dbReference type="DisGeNET" id="10267"/>
<dbReference type="GeneCards" id="RAMP1"/>
<dbReference type="HGNC" id="HGNC:9843">
    <property type="gene designation" value="RAMP1"/>
</dbReference>
<dbReference type="HPA" id="ENSG00000132329">
    <property type="expression patterns" value="Tissue enhanced (endometrium)"/>
</dbReference>
<dbReference type="MIM" id="605153">
    <property type="type" value="gene"/>
</dbReference>
<dbReference type="neXtProt" id="NX_O60894"/>
<dbReference type="OpenTargets" id="ENSG00000132329"/>
<dbReference type="PharmGKB" id="PA34202"/>
<dbReference type="VEuPathDB" id="HostDB:ENSG00000132329"/>
<dbReference type="eggNOG" id="ENOG502S0TC">
    <property type="taxonomic scope" value="Eukaryota"/>
</dbReference>
<dbReference type="GeneTree" id="ENSGT00940000159224"/>
<dbReference type="InParanoid" id="O60894"/>
<dbReference type="OMA" id="CYWPNRM"/>
<dbReference type="OrthoDB" id="10007519at2759"/>
<dbReference type="PAN-GO" id="O60894">
    <property type="GO annotations" value="9 GO annotations based on evolutionary models"/>
</dbReference>
<dbReference type="PhylomeDB" id="O60894"/>
<dbReference type="TreeFam" id="TF333286"/>
<dbReference type="PathwayCommons" id="O60894"/>
<dbReference type="Reactome" id="R-HSA-418555">
    <property type="pathway name" value="G alpha (s) signalling events"/>
</dbReference>
<dbReference type="Reactome" id="R-HSA-419812">
    <property type="pathway name" value="Calcitonin-like ligand receptors"/>
</dbReference>
<dbReference type="SignaLink" id="O60894"/>
<dbReference type="BioGRID-ORCS" id="10267">
    <property type="hits" value="11 hits in 1153 CRISPR screens"/>
</dbReference>
<dbReference type="ChiTaRS" id="RAMP1">
    <property type="organism name" value="human"/>
</dbReference>
<dbReference type="EvolutionaryTrace" id="O60894"/>
<dbReference type="GeneWiki" id="RAMP1"/>
<dbReference type="GenomeRNAi" id="10267"/>
<dbReference type="Pharos" id="O60894">
    <property type="development level" value="Tclin"/>
</dbReference>
<dbReference type="PRO" id="PR:O60894"/>
<dbReference type="Proteomes" id="UP000005640">
    <property type="component" value="Chromosome 2"/>
</dbReference>
<dbReference type="RNAct" id="O60894">
    <property type="molecule type" value="protein"/>
</dbReference>
<dbReference type="Bgee" id="ENSG00000132329">
    <property type="expression patterns" value="Expressed in body of uterus and 193 other cell types or tissues"/>
</dbReference>
<dbReference type="ExpressionAtlas" id="O60894">
    <property type="expression patterns" value="baseline and differential"/>
</dbReference>
<dbReference type="GO" id="GO:0009986">
    <property type="term" value="C:cell surface"/>
    <property type="evidence" value="ECO:0000314"/>
    <property type="project" value="UniProtKB"/>
</dbReference>
<dbReference type="GO" id="GO:1990406">
    <property type="term" value="C:CGRP receptor complex"/>
    <property type="evidence" value="ECO:0000314"/>
    <property type="project" value="UniProtKB"/>
</dbReference>
<dbReference type="GO" id="GO:0005886">
    <property type="term" value="C:plasma membrane"/>
    <property type="evidence" value="ECO:0000314"/>
    <property type="project" value="BHF-UCL"/>
</dbReference>
<dbReference type="GO" id="GO:0043235">
    <property type="term" value="C:receptor complex"/>
    <property type="evidence" value="ECO:0000314"/>
    <property type="project" value="UniProtKB"/>
</dbReference>
<dbReference type="GO" id="GO:0097643">
    <property type="term" value="F:amylin receptor activity"/>
    <property type="evidence" value="ECO:0000353"/>
    <property type="project" value="UniProtKB"/>
</dbReference>
<dbReference type="GO" id="GO:1990407">
    <property type="term" value="F:calcitonin gene-related peptide binding"/>
    <property type="evidence" value="ECO:0000353"/>
    <property type="project" value="UniProtKB"/>
</dbReference>
<dbReference type="GO" id="GO:0001635">
    <property type="term" value="F:calcitonin gene-related peptide receptor activity"/>
    <property type="evidence" value="ECO:0000353"/>
    <property type="project" value="UniProtKB"/>
</dbReference>
<dbReference type="GO" id="GO:0015026">
    <property type="term" value="F:coreceptor activity"/>
    <property type="evidence" value="ECO:0000314"/>
    <property type="project" value="UniProt"/>
</dbReference>
<dbReference type="GO" id="GO:0007189">
    <property type="term" value="P:adenylate cyclase-activating G protein-coupled receptor signaling pathway"/>
    <property type="evidence" value="ECO:0000314"/>
    <property type="project" value="UniProtKB"/>
</dbReference>
<dbReference type="GO" id="GO:0150059">
    <property type="term" value="P:amylin receptor 1 signaling pathway"/>
    <property type="evidence" value="ECO:0000314"/>
    <property type="project" value="UniProt"/>
</dbReference>
<dbReference type="GO" id="GO:0097647">
    <property type="term" value="P:amylin receptor signaling pathway"/>
    <property type="evidence" value="ECO:0000314"/>
    <property type="project" value="UniProtKB"/>
</dbReference>
<dbReference type="GO" id="GO:0001525">
    <property type="term" value="P:angiogenesis"/>
    <property type="evidence" value="ECO:0000314"/>
    <property type="project" value="UniProtKB"/>
</dbReference>
<dbReference type="GO" id="GO:1990408">
    <property type="term" value="P:calcitonin gene-related peptide receptor signaling pathway"/>
    <property type="evidence" value="ECO:0000314"/>
    <property type="project" value="UniProt"/>
</dbReference>
<dbReference type="GO" id="GO:0006816">
    <property type="term" value="P:calcium ion transport"/>
    <property type="evidence" value="ECO:0000314"/>
    <property type="project" value="UniProtKB"/>
</dbReference>
<dbReference type="GO" id="GO:0032870">
    <property type="term" value="P:cellular response to hormone stimulus"/>
    <property type="evidence" value="ECO:0000318"/>
    <property type="project" value="GO_Central"/>
</dbReference>
<dbReference type="GO" id="GO:0007186">
    <property type="term" value="P:G protein-coupled receptor signaling pathway"/>
    <property type="evidence" value="ECO:0000318"/>
    <property type="project" value="GO_Central"/>
</dbReference>
<dbReference type="GO" id="GO:0006886">
    <property type="term" value="P:intracellular protein transport"/>
    <property type="evidence" value="ECO:0007669"/>
    <property type="project" value="InterPro"/>
</dbReference>
<dbReference type="GO" id="GO:0060050">
    <property type="term" value="P:positive regulation of protein glycosylation"/>
    <property type="evidence" value="ECO:0000314"/>
    <property type="project" value="UniProtKB"/>
</dbReference>
<dbReference type="GO" id="GO:0072659">
    <property type="term" value="P:protein localization to plasma membrane"/>
    <property type="evidence" value="ECO:0000314"/>
    <property type="project" value="UniProtKB"/>
</dbReference>
<dbReference type="GO" id="GO:0015031">
    <property type="term" value="P:protein transport"/>
    <property type="evidence" value="ECO:0000314"/>
    <property type="project" value="UniProtKB"/>
</dbReference>
<dbReference type="GO" id="GO:0031623">
    <property type="term" value="P:receptor internalization"/>
    <property type="evidence" value="ECO:0000314"/>
    <property type="project" value="UniProtKB"/>
</dbReference>
<dbReference type="GO" id="GO:0008277">
    <property type="term" value="P:regulation of G protein-coupled receptor signaling pathway"/>
    <property type="evidence" value="ECO:0007669"/>
    <property type="project" value="InterPro"/>
</dbReference>
<dbReference type="FunFam" id="1.10.150.510:FF:000002">
    <property type="entry name" value="Receptor activity-modifying protein 1"/>
    <property type="match status" value="1"/>
</dbReference>
<dbReference type="Gene3D" id="1.10.150.510">
    <property type="entry name" value="Receptor activity modifying family"/>
    <property type="match status" value="1"/>
</dbReference>
<dbReference type="InterPro" id="IPR006985">
    <property type="entry name" value="RAMP"/>
</dbReference>
<dbReference type="InterPro" id="IPR038126">
    <property type="entry name" value="RAMP_sf"/>
</dbReference>
<dbReference type="PANTHER" id="PTHR14076">
    <property type="entry name" value="RECEPTOR ACTIVITY MODIFYING PROTEIN RAMP"/>
    <property type="match status" value="1"/>
</dbReference>
<dbReference type="PANTHER" id="PTHR14076:SF3">
    <property type="entry name" value="RECEPTOR ACTIVITY-MODIFYING PROTEIN 1"/>
    <property type="match status" value="1"/>
</dbReference>
<dbReference type="Pfam" id="PF04901">
    <property type="entry name" value="RAMP"/>
    <property type="match status" value="1"/>
</dbReference>
<organism>
    <name type="scientific">Homo sapiens</name>
    <name type="common">Human</name>
    <dbReference type="NCBI Taxonomy" id="9606"/>
    <lineage>
        <taxon>Eukaryota</taxon>
        <taxon>Metazoa</taxon>
        <taxon>Chordata</taxon>
        <taxon>Craniata</taxon>
        <taxon>Vertebrata</taxon>
        <taxon>Euteleostomi</taxon>
        <taxon>Mammalia</taxon>
        <taxon>Eutheria</taxon>
        <taxon>Euarchontoglires</taxon>
        <taxon>Primates</taxon>
        <taxon>Haplorrhini</taxon>
        <taxon>Catarrhini</taxon>
        <taxon>Hominidae</taxon>
        <taxon>Homo</taxon>
    </lineage>
</organism>
<sequence length="148" mass="16988">MARALCRLPRRGLWLLLAHHLFMTTACQEANYGALLRELCLTQFQVDMEAVGETLWCDWGRTIRSYRELADCTWHMAEKLGCFWPNAEVDRFFLAVHGRYFRSCPISGRAVRDPPGSILYPFIVVPITVTLLVTALVVWQSKRTEGIV</sequence>
<proteinExistence type="evidence at protein level"/>
<gene>
    <name evidence="9" type="primary">RAMP1</name>
</gene>
<accession>O60894</accession>
<accession>Q6FGS5</accession>
<reference key="1">
    <citation type="journal article" date="1998" name="Nature">
        <title>RAMPs regulate the transport and ligand specificity of the calcitonin-receptor-like receptor.</title>
        <authorList>
            <person name="McLatchie L.M."/>
            <person name="Fraser N.J."/>
            <person name="Main M.J."/>
            <person name="Wise A."/>
            <person name="Brown J."/>
            <person name="Thompson N."/>
            <person name="Solari R."/>
            <person name="Lee M.G."/>
            <person name="Foord S.M."/>
        </authorList>
    </citation>
    <scope>NUCLEOTIDE SEQUENCE [MRNA]</scope>
    <scope>FUNCTION</scope>
    <scope>TISSUE SPECIFICITY</scope>
    <scope>TOPOLOGY</scope>
    <source>
        <tissue>Neuroblastoma</tissue>
    </source>
</reference>
<reference key="2">
    <citation type="submission" date="2003-03" db="EMBL/GenBank/DDBJ databases">
        <title>cDNA clones of human proteins involved in signal transduction sequenced by the Guthrie cDNA resource center (www.cdna.org).</title>
        <authorList>
            <person name="Kopatz S.A."/>
            <person name="Aronstam R.S."/>
            <person name="Sharma S.V."/>
        </authorList>
    </citation>
    <scope>NUCLEOTIDE SEQUENCE [LARGE SCALE MRNA]</scope>
    <source>
        <tissue>Lung</tissue>
    </source>
</reference>
<reference key="3">
    <citation type="submission" date="2004-06" db="EMBL/GenBank/DDBJ databases">
        <title>Cloning of human full open reading frames in Gateway(TM) system entry vector (pDONR201).</title>
        <authorList>
            <person name="Ebert L."/>
            <person name="Schick M."/>
            <person name="Neubert P."/>
            <person name="Schatten R."/>
            <person name="Henze S."/>
            <person name="Korn B."/>
        </authorList>
    </citation>
    <scope>NUCLEOTIDE SEQUENCE [LARGE SCALE MRNA]</scope>
</reference>
<reference key="4">
    <citation type="submission" date="2005-07" db="EMBL/GenBank/DDBJ databases">
        <authorList>
            <person name="Mural R.J."/>
            <person name="Istrail S."/>
            <person name="Sutton G.G."/>
            <person name="Florea L."/>
            <person name="Halpern A.L."/>
            <person name="Mobarry C.M."/>
            <person name="Lippert R."/>
            <person name="Walenz B."/>
            <person name="Shatkay H."/>
            <person name="Dew I."/>
            <person name="Miller J.R."/>
            <person name="Flanigan M.J."/>
            <person name="Edwards N.J."/>
            <person name="Bolanos R."/>
            <person name="Fasulo D."/>
            <person name="Halldorsson B.V."/>
            <person name="Hannenhalli S."/>
            <person name="Turner R."/>
            <person name="Yooseph S."/>
            <person name="Lu F."/>
            <person name="Nusskern D.R."/>
            <person name="Shue B.C."/>
            <person name="Zheng X.H."/>
            <person name="Zhong F."/>
            <person name="Delcher A.L."/>
            <person name="Huson D.H."/>
            <person name="Kravitz S.A."/>
            <person name="Mouchard L."/>
            <person name="Reinert K."/>
            <person name="Remington K.A."/>
            <person name="Clark A.G."/>
            <person name="Waterman M.S."/>
            <person name="Eichler E.E."/>
            <person name="Adams M.D."/>
            <person name="Hunkapiller M.W."/>
            <person name="Myers E.W."/>
            <person name="Venter J.C."/>
        </authorList>
    </citation>
    <scope>NUCLEOTIDE SEQUENCE [LARGE SCALE GENOMIC DNA]</scope>
</reference>
<reference key="5">
    <citation type="journal article" date="2004" name="Genome Res.">
        <title>The status, quality, and expansion of the NIH full-length cDNA project: the Mammalian Gene Collection (MGC).</title>
        <authorList>
            <consortium name="The MGC Project Team"/>
        </authorList>
    </citation>
    <scope>NUCLEOTIDE SEQUENCE [LARGE SCALE MRNA]</scope>
    <source>
        <tissue>Brain</tissue>
    </source>
</reference>
<reference evidence="10" key="6">
    <citation type="journal article" date="2008" name="Protein Sci.">
        <title>Crystal structure of the human receptor activity-modifying protein 1 extracellular domain.</title>
        <authorList>
            <person name="Kusano S."/>
            <person name="Kukimoto-Niino M."/>
            <person name="Akasaka R."/>
            <person name="Toyama M."/>
            <person name="Terada T."/>
            <person name="Shirouzu M."/>
            <person name="Shindo T."/>
            <person name="Yokoyama S."/>
        </authorList>
    </citation>
    <scope>X-RAY CRYSTALLOGRAPHY (2.4 ANGSTROMS) OF 22-112</scope>
    <scope>SUBUNIT</scope>
    <scope>DISULFIDE BONDS</scope>
</reference>
<reference evidence="11 12 13" key="7">
    <citation type="journal article" date="2010" name="Structure">
        <title>Crystal structure of the ectodomain complex of the CGRP receptor, a class-B GPCR, reveals the site of drug antagonism.</title>
        <authorList>
            <person name="ter Haar E."/>
            <person name="Koth C.M."/>
            <person name="Abdul-Manan N."/>
            <person name="Swenson L."/>
            <person name="Coll J.T."/>
            <person name="Lippke J.A."/>
            <person name="Lepre C.A."/>
            <person name="Garcia-Guzman M."/>
            <person name="Moore J.M."/>
        </authorList>
    </citation>
    <scope>X-RAY CRYSTALLOGRAPHY (2.1 ANGSTROMS) OF 26-117 IN COMPLEX WITH CALRL AND ANTAGONIST</scope>
    <scope>SUBUNIT</scope>
    <scope>DISULFIDE BONDS</scope>
</reference>
<reference evidence="14 15" key="8">
    <citation type="journal article" date="2021" name="Science">
        <title>Structure and dynamics of the CGRP receptor in apo and peptide-bound forms.</title>
        <authorList>
            <person name="Josephs T.M."/>
            <person name="Belousoff M.J."/>
            <person name="Liang Y.L."/>
            <person name="Piper S.J."/>
            <person name="Cao J."/>
            <person name="Garama D.J."/>
            <person name="Leach K."/>
            <person name="Gregory K.J."/>
            <person name="Christopoulos A."/>
            <person name="Hay D.L."/>
            <person name="Danev R."/>
            <person name="Wootten D."/>
            <person name="Sexton P.M."/>
        </authorList>
    </citation>
    <scope>STRUCTURE BY ELECTRON MICROSCOPY (3.15 ANGSTROMS) OF 27-148 IN COMPLEX WITH CALCA; CALCRL AND G PROTEINS</scope>
    <scope>DISULFIDE BOND</scope>
    <scope>FUNCTION</scope>
    <scope>SUBCELLULAR LOCATION</scope>
</reference>
<reference evidence="16 17" key="9">
    <citation type="journal article" date="2022" name="Science">
        <title>A structural basis for amylin receptor phenotype.</title>
        <authorList>
            <person name="Cao J."/>
            <person name="Belousoff M.J."/>
            <person name="Liang Y.L."/>
            <person name="Johnson R.M."/>
            <person name="Josephs T.M."/>
            <person name="Fletcher M.M."/>
            <person name="Christopoulos A."/>
            <person name="Hay D.L."/>
            <person name="Danev R."/>
            <person name="Wootten D."/>
            <person name="Sexton P.M."/>
        </authorList>
    </citation>
    <scope>STRUCTURE BY ELECTRON MICROSCOPY (2.20 ANGSTROMS) OF 27-148 IN COMPLEX WITH CALCR; IAPP AND G PROTEINS</scope>
    <scope>DISULFIDE BOND</scope>
    <scope>FUNCTION</scope>
    <scope>INTERACTION WITH CALCR</scope>
</reference>
<reference evidence="18" key="10">
    <citation type="journal article" date="2024" name="Biochemistry">
        <title>Cryo-EM Structure of the Human Amylin 1 Receptor in Complex with CGRP and Gs Protein.</title>
        <authorList>
            <person name="Cao J."/>
            <person name="Belousoff M.J."/>
            <person name="Danev R."/>
            <person name="Christopoulos A."/>
            <person name="Wootten D."/>
            <person name="Sexton P.M."/>
        </authorList>
    </citation>
    <scope>STRUCTURE BY ELECTRON MICROSCOPY (2.40 ANGSTROMS) OF 27-148 IN COMPLEX WITH CALCR; CALCA AND G PROTEINS</scope>
    <scope>DISULFIDE BONDS</scope>
    <scope>INTERACTION WITH CALCR</scope>
    <scope>FUNCTION</scope>
</reference>